<organism>
    <name type="scientific">Yersinia pseudotuberculosis serotype O:1b (strain IP 31758)</name>
    <dbReference type="NCBI Taxonomy" id="349747"/>
    <lineage>
        <taxon>Bacteria</taxon>
        <taxon>Pseudomonadati</taxon>
        <taxon>Pseudomonadota</taxon>
        <taxon>Gammaproteobacteria</taxon>
        <taxon>Enterobacterales</taxon>
        <taxon>Yersiniaceae</taxon>
        <taxon>Yersinia</taxon>
    </lineage>
</organism>
<keyword id="KW-0997">Cell inner membrane</keyword>
<keyword id="KW-1003">Cell membrane</keyword>
<keyword id="KW-0406">Ion transport</keyword>
<keyword id="KW-0472">Membrane</keyword>
<keyword id="KW-0520">NAD</keyword>
<keyword id="KW-0915">Sodium</keyword>
<keyword id="KW-0739">Sodium transport</keyword>
<keyword id="KW-1278">Translocase</keyword>
<keyword id="KW-0812">Transmembrane</keyword>
<keyword id="KW-1133">Transmembrane helix</keyword>
<keyword id="KW-0813">Transport</keyword>
<keyword id="KW-0830">Ubiquinone</keyword>
<protein>
    <recommendedName>
        <fullName evidence="1">Na(+)-translocating NADH-quinone reductase subunit D</fullName>
        <shortName evidence="1">Na(+)-NQR subunit D</shortName>
        <shortName evidence="1">Na(+)-translocating NQR subunit D</shortName>
        <ecNumber evidence="1">7.2.1.1</ecNumber>
    </recommendedName>
    <alternativeName>
        <fullName evidence="1">NQR complex subunit D</fullName>
    </alternativeName>
    <alternativeName>
        <fullName evidence="1">NQR-1 subunit D</fullName>
    </alternativeName>
</protein>
<proteinExistence type="inferred from homology"/>
<evidence type="ECO:0000255" key="1">
    <source>
        <dbReference type="HAMAP-Rule" id="MF_00428"/>
    </source>
</evidence>
<gene>
    <name evidence="1" type="primary">nqrD</name>
    <name type="ordered locus">YpsIP31758_3163</name>
</gene>
<dbReference type="EC" id="7.2.1.1" evidence="1"/>
<dbReference type="EMBL" id="CP000720">
    <property type="protein sequence ID" value="ABS48572.1"/>
    <property type="molecule type" value="Genomic_DNA"/>
</dbReference>
<dbReference type="RefSeq" id="WP_002208714.1">
    <property type="nucleotide sequence ID" value="NC_009708.1"/>
</dbReference>
<dbReference type="SMR" id="A7FLJ5"/>
<dbReference type="KEGG" id="ypi:YpsIP31758_3163"/>
<dbReference type="HOGENOM" id="CLU_046659_1_1_6"/>
<dbReference type="Proteomes" id="UP000002412">
    <property type="component" value="Chromosome"/>
</dbReference>
<dbReference type="GO" id="GO:0005886">
    <property type="term" value="C:plasma membrane"/>
    <property type="evidence" value="ECO:0007669"/>
    <property type="project" value="UniProtKB-SubCell"/>
</dbReference>
<dbReference type="GO" id="GO:0016655">
    <property type="term" value="F:oxidoreductase activity, acting on NAD(P)H, quinone or similar compound as acceptor"/>
    <property type="evidence" value="ECO:0007669"/>
    <property type="project" value="UniProtKB-UniRule"/>
</dbReference>
<dbReference type="GO" id="GO:0006814">
    <property type="term" value="P:sodium ion transport"/>
    <property type="evidence" value="ECO:0007669"/>
    <property type="project" value="UniProtKB-UniRule"/>
</dbReference>
<dbReference type="HAMAP" id="MF_00428">
    <property type="entry name" value="NqrD"/>
    <property type="match status" value="1"/>
</dbReference>
<dbReference type="InterPro" id="IPR011292">
    <property type="entry name" value="NqrD"/>
</dbReference>
<dbReference type="InterPro" id="IPR003667">
    <property type="entry name" value="NqrDE/RnfAE"/>
</dbReference>
<dbReference type="NCBIfam" id="TIGR01939">
    <property type="entry name" value="nqrD"/>
    <property type="match status" value="1"/>
</dbReference>
<dbReference type="NCBIfam" id="NF006777">
    <property type="entry name" value="PRK09292.1"/>
    <property type="match status" value="1"/>
</dbReference>
<dbReference type="NCBIfam" id="NF009070">
    <property type="entry name" value="PRK12405.1"/>
    <property type="match status" value="1"/>
</dbReference>
<dbReference type="PANTHER" id="PTHR30586">
    <property type="entry name" value="ELECTRON TRANSPORT COMPLEX PROTEIN RNFE"/>
    <property type="match status" value="1"/>
</dbReference>
<dbReference type="PANTHER" id="PTHR30586:SF1">
    <property type="entry name" value="NA(+)-TRANSLOCATING NADH-QUINONE REDUCTASE SUBUNIT D"/>
    <property type="match status" value="1"/>
</dbReference>
<dbReference type="Pfam" id="PF02508">
    <property type="entry name" value="Rnf-Nqr"/>
    <property type="match status" value="1"/>
</dbReference>
<dbReference type="PIRSF" id="PIRSF006102">
    <property type="entry name" value="NQR_DE"/>
    <property type="match status" value="1"/>
</dbReference>
<name>NQRD_YERP3</name>
<reference key="1">
    <citation type="journal article" date="2007" name="PLoS Genet.">
        <title>The complete genome sequence of Yersinia pseudotuberculosis IP31758, the causative agent of Far East scarlet-like fever.</title>
        <authorList>
            <person name="Eppinger M."/>
            <person name="Rosovitz M.J."/>
            <person name="Fricke W.F."/>
            <person name="Rasko D.A."/>
            <person name="Kokorina G."/>
            <person name="Fayolle C."/>
            <person name="Lindler L.E."/>
            <person name="Carniel E."/>
            <person name="Ravel J."/>
        </authorList>
    </citation>
    <scope>NUCLEOTIDE SEQUENCE [LARGE SCALE GENOMIC DNA]</scope>
    <source>
        <strain>IP 31758</strain>
    </source>
</reference>
<feature type="chain" id="PRO_1000060178" description="Na(+)-translocating NADH-quinone reductase subunit D">
    <location>
        <begin position="1"/>
        <end position="209"/>
    </location>
</feature>
<feature type="transmembrane region" description="Helical" evidence="1">
    <location>
        <begin position="42"/>
        <end position="62"/>
    </location>
</feature>
<feature type="transmembrane region" description="Helical" evidence="1">
    <location>
        <begin position="66"/>
        <end position="86"/>
    </location>
</feature>
<feature type="transmembrane region" description="Helical" evidence="1">
    <location>
        <begin position="103"/>
        <end position="123"/>
    </location>
</feature>
<feature type="transmembrane region" description="Helical" evidence="1">
    <location>
        <begin position="131"/>
        <end position="151"/>
    </location>
</feature>
<feature type="transmembrane region" description="Helical" evidence="1">
    <location>
        <begin position="178"/>
        <end position="198"/>
    </location>
</feature>
<sequence length="209" mass="22643">MADSKEIKRVLLSPLFDNNPIALQILGVCSALAVTTKLETALVMTLAVTLVTAFSSFFISLIRNHIPNSVRIIVQMVIIASLVIVVDQVLRAYAYEISKQLSVFVGLIITNCIVMGRAEAYAMKSPPIESFMDGIGNGLGYGVILVLVGFVRELVGSGKLFGVTVLETVQNGGWYLPNGLFLLAPSAFFIIGLLIWGLRTLKPAQIEKE</sequence>
<comment type="function">
    <text evidence="1">NQR complex catalyzes the reduction of ubiquinone-1 to ubiquinol by two successive reactions, coupled with the transport of Na(+) ions from the cytoplasm to the periplasm. NqrA to NqrE are probably involved in the second step, the conversion of ubisemiquinone to ubiquinol.</text>
</comment>
<comment type="catalytic activity">
    <reaction evidence="1">
        <text>a ubiquinone + n Na(+)(in) + NADH + H(+) = a ubiquinol + n Na(+)(out) + NAD(+)</text>
        <dbReference type="Rhea" id="RHEA:47748"/>
        <dbReference type="Rhea" id="RHEA-COMP:9565"/>
        <dbReference type="Rhea" id="RHEA-COMP:9566"/>
        <dbReference type="ChEBI" id="CHEBI:15378"/>
        <dbReference type="ChEBI" id="CHEBI:16389"/>
        <dbReference type="ChEBI" id="CHEBI:17976"/>
        <dbReference type="ChEBI" id="CHEBI:29101"/>
        <dbReference type="ChEBI" id="CHEBI:57540"/>
        <dbReference type="ChEBI" id="CHEBI:57945"/>
        <dbReference type="EC" id="7.2.1.1"/>
    </reaction>
</comment>
<comment type="subunit">
    <text evidence="1">Composed of six subunits; NqrA, NqrB, NqrC, NqrD, NqrE and NqrF.</text>
</comment>
<comment type="subcellular location">
    <subcellularLocation>
        <location evidence="1">Cell inner membrane</location>
        <topology evidence="1">Multi-pass membrane protein</topology>
    </subcellularLocation>
</comment>
<comment type="similarity">
    <text evidence="1">Belongs to the NqrDE/RnfAE family.</text>
</comment>
<accession>A7FLJ5</accession>